<sequence length="411" mass="45596">MLLTVFCAPRDRSETTFALDVSPELELRDFLALCELESGIPAGEIQIIYAEQPLQDPTRALGNYGLKDGDVLVLRQAERLRAPPQPTVPGLPRIDFSSIAVPGTSSGQNRNRPQQAQRPSTTQPPPPQATTSPGSGVSPQGLDNPALLRDMLLANPHELSLLKERNPPLAEALLSGDLERFTKVLMEQQQDRARRDQERIKLLTADPFDLDAQAKIEEEIRQHNIEENMTIAMEEAPESFGQVVMLYINCKVNGHPVKAFVDSGAQMTIMSQACAERCNIMRLVDRRWAGIAKGVGTQKIIGRVHLAQVQIEGDFLPCSFSILEDQPMDMLLGLDMLKRHQCSIDLKKNVLLIGTTGTETRFLPEAELPECARLAYGPEGREEPRPDEIADRELAEAIQRSVQDSGKMHDM</sequence>
<evidence type="ECO:0000250" key="1">
    <source>
        <dbReference type="UniProtKB" id="Q5TDH0"/>
    </source>
</evidence>
<evidence type="ECO:0000255" key="2">
    <source>
        <dbReference type="PROSITE-ProRule" id="PRU00214"/>
    </source>
</evidence>
<evidence type="ECO:0000256" key="3">
    <source>
        <dbReference type="SAM" id="MobiDB-lite"/>
    </source>
</evidence>
<evidence type="ECO:0000303" key="4">
    <source ref="2"/>
</evidence>
<evidence type="ECO:0000305" key="5"/>
<protein>
    <recommendedName>
        <fullName evidence="5">Protein DDI1 homolog 2</fullName>
        <ecNumber evidence="1">3.4.23.-</ecNumber>
    </recommendedName>
</protein>
<reference key="1">
    <citation type="journal article" date="2004" name="Proc. Natl. Acad. Sci. U.S.A.">
        <title>Hematopoietic gene expression profile in zebrafish kidney marrow.</title>
        <authorList>
            <person name="Song H.-D."/>
            <person name="Sun X.-J."/>
            <person name="Deng M."/>
            <person name="Zhang G.-W."/>
            <person name="Zhou Y."/>
            <person name="Wu X.-Y."/>
            <person name="Sheng Y."/>
            <person name="Chen Y."/>
            <person name="Ruan Z."/>
            <person name="Jiang C.-L."/>
            <person name="Fan H.-Y."/>
            <person name="Zon L.I."/>
            <person name="Kanki J.P."/>
            <person name="Liu T.X."/>
            <person name="Look A.T."/>
            <person name="Chen Z."/>
        </authorList>
    </citation>
    <scope>NUCLEOTIDE SEQUENCE [LARGE SCALE MRNA] (ISOFORM 1)</scope>
    <source>
        <tissue>Kidney marrow</tissue>
    </source>
</reference>
<reference key="2">
    <citation type="submission" date="2003-07" db="EMBL/GenBank/DDBJ databases">
        <authorList>
            <consortium name="NIH - Zebrafish Gene Collection (ZGC) project"/>
        </authorList>
    </citation>
    <scope>NUCLEOTIDE SEQUENCE [LARGE SCALE MRNA] (ISOFORM 2)</scope>
    <source>
        <strain>AB</strain>
    </source>
</reference>
<name>DDI2_DANRE</name>
<feature type="chain" id="PRO_0000287092" description="Protein DDI1 homolog 2">
    <location>
        <begin position="1"/>
        <end position="411"/>
    </location>
</feature>
<feature type="domain" description="Ubiquitin-like" evidence="2">
    <location>
        <begin position="1"/>
        <end position="81"/>
    </location>
</feature>
<feature type="region of interest" description="Disordered" evidence="3">
    <location>
        <begin position="82"/>
        <end position="144"/>
    </location>
</feature>
<feature type="short sequence motif" description="Ubiquitin-binding" evidence="5">
    <location>
        <begin position="387"/>
        <end position="406"/>
    </location>
</feature>
<feature type="compositionally biased region" description="Low complexity" evidence="3">
    <location>
        <begin position="108"/>
        <end position="121"/>
    </location>
</feature>
<feature type="active site" evidence="5">
    <location>
        <position position="262"/>
    </location>
</feature>
<feature type="splice variant" id="VSP_025299" description="In isoform 2." evidence="4">
    <original>GKMHDM</original>
    <variation>AGQN</variation>
    <location>
        <begin position="406"/>
        <end position="411"/>
    </location>
</feature>
<feature type="sequence conflict" description="In Ref. 2; AAH55129." evidence="5" ref="2">
    <original>V</original>
    <variation>I</variation>
    <location>
        <position position="137"/>
    </location>
</feature>
<feature type="sequence conflict" description="In Ref. 2; AAH55129." evidence="5" ref="2">
    <original>P</original>
    <variation>S</variation>
    <location>
        <position position="168"/>
    </location>
</feature>
<keyword id="KW-0025">Alternative splicing</keyword>
<keyword id="KW-0064">Aspartyl protease</keyword>
<keyword id="KW-0158">Chromosome</keyword>
<keyword id="KW-0963">Cytoplasm</keyword>
<keyword id="KW-0378">Hydrolase</keyword>
<keyword id="KW-0645">Protease</keyword>
<keyword id="KW-1185">Reference proteome</keyword>
<organism>
    <name type="scientific">Danio rerio</name>
    <name type="common">Zebrafish</name>
    <name type="synonym">Brachydanio rerio</name>
    <dbReference type="NCBI Taxonomy" id="7955"/>
    <lineage>
        <taxon>Eukaryota</taxon>
        <taxon>Metazoa</taxon>
        <taxon>Chordata</taxon>
        <taxon>Craniata</taxon>
        <taxon>Vertebrata</taxon>
        <taxon>Euteleostomi</taxon>
        <taxon>Actinopterygii</taxon>
        <taxon>Neopterygii</taxon>
        <taxon>Teleostei</taxon>
        <taxon>Ostariophysi</taxon>
        <taxon>Cypriniformes</taxon>
        <taxon>Danionidae</taxon>
        <taxon>Danioninae</taxon>
        <taxon>Danio</taxon>
    </lineage>
</organism>
<gene>
    <name type="primary">ddi2</name>
</gene>
<accession>Q6TH22</accession>
<accession>Q7SY47</accession>
<comment type="function">
    <text evidence="1">Aspartic protease that mediates the cleavage of NFE2L1/NRF1 at 'Leu-104', thereby promoting release of NFE2L1/NRF1 from the endoplasmic reticulum membrane. Ubiquitination of NFE2L1/NRF1 is a prerequisite for cleavage, suggesting that DDI2 specifically recognizes and binds ubiquitinated NFE2L1/NRF1. Seems to act as a proteasomal shuttle which links the proteasome and replication fork proteins like RTF2. Required for cellular survival following replication stress.</text>
</comment>
<comment type="subunit">
    <text evidence="1">Homodimer.</text>
</comment>
<comment type="subcellular location">
    <subcellularLocation>
        <location evidence="1">Cytoplasm</location>
        <location evidence="1">Cytosol</location>
    </subcellularLocation>
    <subcellularLocation>
        <location evidence="1">Chromosome</location>
    </subcellularLocation>
</comment>
<comment type="alternative products">
    <event type="alternative splicing"/>
    <isoform>
        <id>Q6TH22-1</id>
        <name>1</name>
        <sequence type="displayed"/>
    </isoform>
    <isoform>
        <id>Q6TH22-2</id>
        <name>2</name>
        <sequence type="described" ref="VSP_025299"/>
    </isoform>
</comment>
<comment type="similarity">
    <text evidence="5">Belongs to the DDI1 family.</text>
</comment>
<comment type="caution">
    <text evidence="1">Although this protein contains the conserved Asp-262 that functions as an active site, this protein does not have proteolytic activity, and may therefore be catalytically inactive.</text>
</comment>
<proteinExistence type="evidence at transcript level"/>
<dbReference type="EC" id="3.4.23.-" evidence="1"/>
<dbReference type="EMBL" id="AY398334">
    <property type="protein sequence ID" value="AAQ97767.1"/>
    <property type="molecule type" value="mRNA"/>
</dbReference>
<dbReference type="EMBL" id="BC055129">
    <property type="protein sequence ID" value="AAH55129.1"/>
    <property type="molecule type" value="mRNA"/>
</dbReference>
<dbReference type="RefSeq" id="NP_938189.2">
    <molecule id="Q6TH22-2"/>
    <property type="nucleotide sequence ID" value="NM_198375.2"/>
</dbReference>
<dbReference type="RefSeq" id="XP_017211936.1">
    <property type="nucleotide sequence ID" value="XM_017356447.1"/>
</dbReference>
<dbReference type="SMR" id="Q6TH22"/>
<dbReference type="FunCoup" id="Q6TH22">
    <property type="interactions" value="1352"/>
</dbReference>
<dbReference type="STRING" id="7955.ENSDARP00000129420"/>
<dbReference type="MEROPS" id="A28.003"/>
<dbReference type="PaxDb" id="7955-ENSDARP00000129420"/>
<dbReference type="Ensembl" id="ENSDART00000155928">
    <molecule id="Q6TH22-1"/>
    <property type="protein sequence ID" value="ENSDARP00000129420"/>
    <property type="gene ID" value="ENSDARG00000006477"/>
</dbReference>
<dbReference type="GeneID" id="386644"/>
<dbReference type="KEGG" id="dre:386644"/>
<dbReference type="AGR" id="ZFIN:ZDB-GENE-031030-15"/>
<dbReference type="CTD" id="84301"/>
<dbReference type="ZFIN" id="ZDB-GENE-031030-15">
    <property type="gene designation" value="ddi2"/>
</dbReference>
<dbReference type="eggNOG" id="KOG0012">
    <property type="taxonomic scope" value="Eukaryota"/>
</dbReference>
<dbReference type="HOGENOM" id="CLU_020435_1_0_1"/>
<dbReference type="InParanoid" id="Q6TH22"/>
<dbReference type="OMA" id="GHRLNAF"/>
<dbReference type="OrthoDB" id="1047367at2759"/>
<dbReference type="PhylomeDB" id="Q6TH22"/>
<dbReference type="TreeFam" id="TF333421"/>
<dbReference type="PRO" id="PR:Q6TH22"/>
<dbReference type="Proteomes" id="UP000000437">
    <property type="component" value="Chromosome 6"/>
</dbReference>
<dbReference type="Bgee" id="ENSDARG00000006477">
    <property type="expression patterns" value="Expressed in mature ovarian follicle and 21 other cell types or tissues"/>
</dbReference>
<dbReference type="GO" id="GO:0005694">
    <property type="term" value="C:chromosome"/>
    <property type="evidence" value="ECO:0007669"/>
    <property type="project" value="UniProtKB-SubCell"/>
</dbReference>
<dbReference type="GO" id="GO:0005829">
    <property type="term" value="C:cytosol"/>
    <property type="evidence" value="ECO:0007669"/>
    <property type="project" value="UniProtKB-SubCell"/>
</dbReference>
<dbReference type="GO" id="GO:0004190">
    <property type="term" value="F:aspartic-type endopeptidase activity"/>
    <property type="evidence" value="ECO:0000250"/>
    <property type="project" value="UniProtKB"/>
</dbReference>
<dbReference type="GO" id="GO:0042802">
    <property type="term" value="F:identical protein binding"/>
    <property type="evidence" value="ECO:0000250"/>
    <property type="project" value="UniProtKB"/>
</dbReference>
<dbReference type="GO" id="GO:0072711">
    <property type="term" value="P:cellular response to hydroxyurea"/>
    <property type="evidence" value="ECO:0000250"/>
    <property type="project" value="UniProtKB"/>
</dbReference>
<dbReference type="GO" id="GO:0010498">
    <property type="term" value="P:proteasomal protein catabolic process"/>
    <property type="evidence" value="ECO:0000250"/>
    <property type="project" value="UniProtKB"/>
</dbReference>
<dbReference type="GO" id="GO:0016485">
    <property type="term" value="P:protein processing"/>
    <property type="evidence" value="ECO:0000250"/>
    <property type="project" value="UniProtKB"/>
</dbReference>
<dbReference type="GO" id="GO:0097752">
    <property type="term" value="P:regulation of DNA stability"/>
    <property type="evidence" value="ECO:0000250"/>
    <property type="project" value="UniProtKB"/>
</dbReference>
<dbReference type="GO" id="GO:0031647">
    <property type="term" value="P:regulation of protein stability"/>
    <property type="evidence" value="ECO:0000250"/>
    <property type="project" value="UniProtKB"/>
</dbReference>
<dbReference type="CDD" id="cd05479">
    <property type="entry name" value="RP_DDI"/>
    <property type="match status" value="1"/>
</dbReference>
<dbReference type="CDD" id="cd01796">
    <property type="entry name" value="Ubl_Ddi1_like"/>
    <property type="match status" value="1"/>
</dbReference>
<dbReference type="FunFam" id="2.40.70.10:FF:000005">
    <property type="entry name" value="DNA damage inducible 1 homolog 2"/>
    <property type="match status" value="1"/>
</dbReference>
<dbReference type="FunFam" id="3.10.20.90:FF:000107">
    <property type="entry name" value="protein DDI1 homolog 2 isoform X1"/>
    <property type="match status" value="1"/>
</dbReference>
<dbReference type="Gene3D" id="2.40.70.10">
    <property type="entry name" value="Acid Proteases"/>
    <property type="match status" value="1"/>
</dbReference>
<dbReference type="Gene3D" id="3.10.20.90">
    <property type="entry name" value="Phosphatidylinositol 3-kinase Catalytic Subunit, Chain A, domain 1"/>
    <property type="match status" value="1"/>
</dbReference>
<dbReference type="InterPro" id="IPR033882">
    <property type="entry name" value="DDI1_N"/>
</dbReference>
<dbReference type="InterPro" id="IPR019103">
    <property type="entry name" value="Peptidase_aspartic_DDI1-type"/>
</dbReference>
<dbReference type="InterPro" id="IPR021109">
    <property type="entry name" value="Peptidase_aspartic_dom_sf"/>
</dbReference>
<dbReference type="InterPro" id="IPR000626">
    <property type="entry name" value="Ubiquitin-like_dom"/>
</dbReference>
<dbReference type="InterPro" id="IPR029071">
    <property type="entry name" value="Ubiquitin-like_domsf"/>
</dbReference>
<dbReference type="PANTHER" id="PTHR15397:SF3">
    <property type="entry name" value="DNA DAMAGE INDUCIBLE 1 HOMOLOG 2"/>
    <property type="match status" value="1"/>
</dbReference>
<dbReference type="PANTHER" id="PTHR15397">
    <property type="entry name" value="SODIUM-GLUCOSE COTRANSPORTER REGULATORY PROTEIN -RELATED"/>
    <property type="match status" value="1"/>
</dbReference>
<dbReference type="Pfam" id="PF09668">
    <property type="entry name" value="Asp_protease"/>
    <property type="match status" value="1"/>
</dbReference>
<dbReference type="Pfam" id="PF24669">
    <property type="entry name" value="Ddi2_HDD"/>
    <property type="match status" value="1"/>
</dbReference>
<dbReference type="Pfam" id="PF00240">
    <property type="entry name" value="ubiquitin"/>
    <property type="match status" value="1"/>
</dbReference>
<dbReference type="SUPFAM" id="SSF50630">
    <property type="entry name" value="Acid proteases"/>
    <property type="match status" value="1"/>
</dbReference>
<dbReference type="SUPFAM" id="SSF54236">
    <property type="entry name" value="Ubiquitin-like"/>
    <property type="match status" value="1"/>
</dbReference>
<dbReference type="PROSITE" id="PS50053">
    <property type="entry name" value="UBIQUITIN_2"/>
    <property type="match status" value="1"/>
</dbReference>